<keyword id="KW-0963">Cytoplasm</keyword>
<keyword id="KW-0256">Endoplasmic reticulum</keyword>
<keyword id="KW-1017">Isopeptide bond</keyword>
<keyword id="KW-0539">Nucleus</keyword>
<keyword id="KW-1185">Reference proteome</keyword>
<keyword id="KW-0683">Retinol-binding</keyword>
<keyword id="KW-0813">Transport</keyword>
<keyword id="KW-0832">Ubl conjugation</keyword>
<keyword id="KW-0845">Vitamin A</keyword>
<comment type="function">
    <text evidence="1">Transports retinoic acid to the nucleus. Regulates the access of retinoic acid to the nuclear retinoic acid receptors (By similarity).</text>
</comment>
<comment type="subunit">
    <text evidence="1">Interacts with importin alpha, RXR and RARA.</text>
</comment>
<comment type="subcellular location">
    <subcellularLocation>
        <location>Cytoplasm</location>
    </subcellularLocation>
    <subcellularLocation>
        <location evidence="1">Endoplasmic reticulum</location>
    </subcellularLocation>
    <subcellularLocation>
        <location evidence="1">Nucleus</location>
    </subcellularLocation>
    <text evidence="1">Upon ligand binding, a conformation change exposes a nuclear localization motif and the protein is transported into the nucleus.</text>
</comment>
<comment type="domain">
    <text evidence="1">Forms a beta-barrel structure that accommodates hydrophobic ligands in its interior.</text>
</comment>
<comment type="PTM">
    <text>Sumoylated in response to retinoic acid binding, sumoylation is critical for dissociation from ER and subsequent nuclear translocation.</text>
</comment>
<comment type="similarity">
    <text evidence="2">Belongs to the calycin superfamily. Fatty-acid binding protein (FABP) family.</text>
</comment>
<evidence type="ECO:0000250" key="1"/>
<evidence type="ECO:0000305" key="2"/>
<protein>
    <recommendedName>
        <fullName>Cellular retinoic acid-binding protein 2</fullName>
    </recommendedName>
    <alternativeName>
        <fullName>Cellular retinoic acid-binding protein II</fullName>
        <shortName>CRABP-II</shortName>
    </alternativeName>
</protein>
<sequence>MPNFSGNWKIIRSENFEEMLKALGVNMMMRKIAVAAASKPAVEIKQENDDTFYIKTSTTVRTTEINFKIGEEFEEQTVDGRPCKSLVKWESENKMVCEQRLLKGEGPKTSWSRELTNDGELILTMTADDVVCTRVYVRE</sequence>
<name>RABP2_RAT</name>
<dbReference type="EMBL" id="U23407">
    <property type="protein sequence ID" value="AAA80225.1"/>
    <property type="molecule type" value="mRNA"/>
</dbReference>
<dbReference type="PIR" id="I53298">
    <property type="entry name" value="I53298"/>
</dbReference>
<dbReference type="RefSeq" id="NP_058940.1">
    <property type="nucleotide sequence ID" value="NM_017244.2"/>
</dbReference>
<dbReference type="SMR" id="P51673"/>
<dbReference type="FunCoup" id="P51673">
    <property type="interactions" value="43"/>
</dbReference>
<dbReference type="STRING" id="10116.ENSRNOP00000015134"/>
<dbReference type="ChEMBL" id="CHEMBL4345"/>
<dbReference type="PhosphoSitePlus" id="P51673"/>
<dbReference type="PaxDb" id="10116-ENSRNOP00000015134"/>
<dbReference type="GeneID" id="29563"/>
<dbReference type="KEGG" id="rno:29563"/>
<dbReference type="UCSC" id="RGD:62070">
    <property type="organism name" value="rat"/>
</dbReference>
<dbReference type="AGR" id="RGD:62070"/>
<dbReference type="CTD" id="1382"/>
<dbReference type="RGD" id="62070">
    <property type="gene designation" value="Crabp2"/>
</dbReference>
<dbReference type="VEuPathDB" id="HostDB:ENSRNOG00000022101"/>
<dbReference type="eggNOG" id="KOG4015">
    <property type="taxonomic scope" value="Eukaryota"/>
</dbReference>
<dbReference type="HOGENOM" id="CLU_113772_0_2_1"/>
<dbReference type="InParanoid" id="P51673"/>
<dbReference type="OrthoDB" id="13881at9989"/>
<dbReference type="PhylomeDB" id="P51673"/>
<dbReference type="TreeFam" id="TF316894"/>
<dbReference type="Reactome" id="R-RNO-5362517">
    <property type="pathway name" value="Signaling by Retinoic Acid"/>
</dbReference>
<dbReference type="PRO" id="PR:P51673"/>
<dbReference type="Proteomes" id="UP000002494">
    <property type="component" value="Chromosome 2"/>
</dbReference>
<dbReference type="Bgee" id="ENSRNOG00000022101">
    <property type="expression patterns" value="Expressed in ovary and 18 other cell types or tissues"/>
</dbReference>
<dbReference type="GO" id="GO:0005737">
    <property type="term" value="C:cytoplasm"/>
    <property type="evidence" value="ECO:0000266"/>
    <property type="project" value="RGD"/>
</dbReference>
<dbReference type="GO" id="GO:0005829">
    <property type="term" value="C:cytosol"/>
    <property type="evidence" value="ECO:0000318"/>
    <property type="project" value="GO_Central"/>
</dbReference>
<dbReference type="GO" id="GO:0005783">
    <property type="term" value="C:endoplasmic reticulum"/>
    <property type="evidence" value="ECO:0000266"/>
    <property type="project" value="RGD"/>
</dbReference>
<dbReference type="GO" id="GO:0005634">
    <property type="term" value="C:nucleus"/>
    <property type="evidence" value="ECO:0000266"/>
    <property type="project" value="RGD"/>
</dbReference>
<dbReference type="GO" id="GO:0030332">
    <property type="term" value="F:cyclin binding"/>
    <property type="evidence" value="ECO:0000266"/>
    <property type="project" value="RGD"/>
</dbReference>
<dbReference type="GO" id="GO:0005504">
    <property type="term" value="F:fatty acid binding"/>
    <property type="evidence" value="ECO:0000318"/>
    <property type="project" value="GO_Central"/>
</dbReference>
<dbReference type="GO" id="GO:0008289">
    <property type="term" value="F:lipid binding"/>
    <property type="evidence" value="ECO:0000304"/>
    <property type="project" value="RGD"/>
</dbReference>
<dbReference type="GO" id="GO:0016918">
    <property type="term" value="F:retinal binding"/>
    <property type="evidence" value="ECO:0007669"/>
    <property type="project" value="UniProtKB-KW"/>
</dbReference>
<dbReference type="GO" id="GO:0001972">
    <property type="term" value="F:retinoic acid binding"/>
    <property type="evidence" value="ECO:0000314"/>
    <property type="project" value="RGD"/>
</dbReference>
<dbReference type="GO" id="GO:0019841">
    <property type="term" value="F:retinol binding"/>
    <property type="evidence" value="ECO:0007669"/>
    <property type="project" value="UniProtKB-KW"/>
</dbReference>
<dbReference type="GO" id="GO:0035115">
    <property type="term" value="P:embryonic forelimb morphogenesis"/>
    <property type="evidence" value="ECO:0000266"/>
    <property type="project" value="RGD"/>
</dbReference>
<dbReference type="GO" id="GO:0015908">
    <property type="term" value="P:fatty acid transport"/>
    <property type="evidence" value="ECO:0000318"/>
    <property type="project" value="GO_Central"/>
</dbReference>
<dbReference type="GO" id="GO:0006869">
    <property type="term" value="P:lipid transport"/>
    <property type="evidence" value="ECO:0000303"/>
    <property type="project" value="RGD"/>
</dbReference>
<dbReference type="GO" id="GO:0048672">
    <property type="term" value="P:positive regulation of collateral sprouting"/>
    <property type="evidence" value="ECO:0000266"/>
    <property type="project" value="RGD"/>
</dbReference>
<dbReference type="GO" id="GO:0002138">
    <property type="term" value="P:retinoic acid biosynthetic process"/>
    <property type="evidence" value="ECO:0000270"/>
    <property type="project" value="RGD"/>
</dbReference>
<dbReference type="GO" id="GO:0042573">
    <property type="term" value="P:retinoic acid metabolic process"/>
    <property type="evidence" value="ECO:0000266"/>
    <property type="project" value="RGD"/>
</dbReference>
<dbReference type="FunFam" id="2.40.128.20:FF:000001">
    <property type="entry name" value="Fatty acid-binding protein, adipocyte"/>
    <property type="match status" value="1"/>
</dbReference>
<dbReference type="Gene3D" id="2.40.128.20">
    <property type="match status" value="1"/>
</dbReference>
<dbReference type="InterPro" id="IPR012674">
    <property type="entry name" value="Calycin"/>
</dbReference>
<dbReference type="InterPro" id="IPR000463">
    <property type="entry name" value="Fatty_acid-bd"/>
</dbReference>
<dbReference type="InterPro" id="IPR031259">
    <property type="entry name" value="ILBP"/>
</dbReference>
<dbReference type="InterPro" id="IPR000566">
    <property type="entry name" value="Lipocln_cytosolic_FA-bd_dom"/>
</dbReference>
<dbReference type="PANTHER" id="PTHR11955">
    <property type="entry name" value="FATTY ACID BINDING PROTEIN"/>
    <property type="match status" value="1"/>
</dbReference>
<dbReference type="Pfam" id="PF00061">
    <property type="entry name" value="Lipocalin"/>
    <property type="match status" value="1"/>
</dbReference>
<dbReference type="PRINTS" id="PR00178">
    <property type="entry name" value="FATTYACIDBP"/>
</dbReference>
<dbReference type="SUPFAM" id="SSF50814">
    <property type="entry name" value="Lipocalins"/>
    <property type="match status" value="1"/>
</dbReference>
<dbReference type="PROSITE" id="PS00214">
    <property type="entry name" value="FABP"/>
    <property type="match status" value="1"/>
</dbReference>
<reference key="1">
    <citation type="journal article" date="1995" name="Endocrinology">
        <title>Inducible expression of cellular retinoic acid-binding protein II in rat ovary: gonadotropin regulation during luteal development.</title>
        <authorList>
            <person name="Bucco R.A."/>
            <person name="Melner M.H."/>
            <person name="Gordon D.S."/>
            <person name="Leers-Sucheta S."/>
            <person name="Ong D.E."/>
        </authorList>
    </citation>
    <scope>NUCLEOTIDE SEQUENCE [MRNA]</scope>
    <source>
        <strain>Sprague-Dawley</strain>
        <tissue>Corpus luteum</tissue>
    </source>
</reference>
<accession>P51673</accession>
<organism>
    <name type="scientific">Rattus norvegicus</name>
    <name type="common">Rat</name>
    <dbReference type="NCBI Taxonomy" id="10116"/>
    <lineage>
        <taxon>Eukaryota</taxon>
        <taxon>Metazoa</taxon>
        <taxon>Chordata</taxon>
        <taxon>Craniata</taxon>
        <taxon>Vertebrata</taxon>
        <taxon>Euteleostomi</taxon>
        <taxon>Mammalia</taxon>
        <taxon>Eutheria</taxon>
        <taxon>Euarchontoglires</taxon>
        <taxon>Glires</taxon>
        <taxon>Rodentia</taxon>
        <taxon>Myomorpha</taxon>
        <taxon>Muroidea</taxon>
        <taxon>Muridae</taxon>
        <taxon>Murinae</taxon>
        <taxon>Rattus</taxon>
    </lineage>
</organism>
<gene>
    <name type="primary">Crabp2</name>
</gene>
<feature type="chain" id="PRO_0000067417" description="Cellular retinoic acid-binding protein 2">
    <location>
        <begin position="1"/>
        <end position="139"/>
    </location>
</feature>
<feature type="short sequence motif" description="Nuclear localization signal" evidence="1">
    <location>
        <begin position="21"/>
        <end position="31"/>
    </location>
</feature>
<feature type="binding site" evidence="1">
    <location>
        <begin position="134"/>
        <end position="136"/>
    </location>
    <ligand>
        <name>all-trans-retinoate</name>
        <dbReference type="ChEBI" id="CHEBI:35291"/>
    </ligand>
</feature>
<feature type="cross-link" description="Glycyl lysine isopeptide (Lys-Gly) (interchain with G-Cter in SUMO)" evidence="1">
    <location>
        <position position="103"/>
    </location>
</feature>
<proteinExistence type="evidence at transcript level"/>